<dbReference type="EC" id="1.14.11.-"/>
<dbReference type="EMBL" id="AF401484">
    <property type="protein sequence ID" value="AAM90671.1"/>
    <property type="molecule type" value="mRNA"/>
</dbReference>
<dbReference type="EMBL" id="AF401485">
    <property type="protein sequence ID" value="AAM90672.1"/>
    <property type="molecule type" value="mRNA"/>
</dbReference>
<dbReference type="EMBL" id="BC057498">
    <property type="protein sequence ID" value="AAH57498.1"/>
    <property type="molecule type" value="mRNA"/>
</dbReference>
<dbReference type="RefSeq" id="NP_739567.3">
    <molecule id="Q6PFM0-1"/>
    <property type="nucleotide sequence ID" value="NM_170761.3"/>
</dbReference>
<dbReference type="SMR" id="Q6PFM0"/>
<dbReference type="FunCoup" id="Q6PFM0">
    <property type="interactions" value="1219"/>
</dbReference>
<dbReference type="STRING" id="7955.ENSDARP00000139813"/>
<dbReference type="PaxDb" id="7955-ENSDARP00000107901"/>
<dbReference type="Ensembl" id="ENSDART00000157822">
    <molecule id="Q6PFM0-1"/>
    <property type="protein sequence ID" value="ENSDARP00000139813"/>
    <property type="gene ID" value="ENSDARG00000102896"/>
</dbReference>
<dbReference type="GeneID" id="266962"/>
<dbReference type="KEGG" id="dre:266962"/>
<dbReference type="AGR" id="ZFIN:ZDB-GENE-040426-17"/>
<dbReference type="CTD" id="23210"/>
<dbReference type="ZFIN" id="ZDB-GENE-040426-17">
    <property type="gene designation" value="jmjd6"/>
</dbReference>
<dbReference type="eggNOG" id="KOG2130">
    <property type="taxonomic scope" value="Eukaryota"/>
</dbReference>
<dbReference type="HOGENOM" id="CLU_016785_8_0_1"/>
<dbReference type="InParanoid" id="Q6PFM0"/>
<dbReference type="OMA" id="NAWVAMR"/>
<dbReference type="OrthoDB" id="424465at2759"/>
<dbReference type="PhylomeDB" id="Q6PFM0"/>
<dbReference type="TreeFam" id="TF314988"/>
<dbReference type="Reactome" id="R-DRE-3214842">
    <property type="pathway name" value="HDMs demethylate histones"/>
</dbReference>
<dbReference type="PRO" id="PR:Q6PFM0"/>
<dbReference type="Proteomes" id="UP000000437">
    <property type="component" value="Chromosome 3"/>
</dbReference>
<dbReference type="Bgee" id="ENSDARG00000102896">
    <property type="expression patterns" value="Expressed in early embryo and 27 other cell types or tissues"/>
</dbReference>
<dbReference type="GO" id="GO:0005737">
    <property type="term" value="C:cytoplasm"/>
    <property type="evidence" value="ECO:0000250"/>
    <property type="project" value="UniProtKB"/>
</dbReference>
<dbReference type="GO" id="GO:0005730">
    <property type="term" value="C:nucleolus"/>
    <property type="evidence" value="ECO:0000250"/>
    <property type="project" value="UniProtKB"/>
</dbReference>
<dbReference type="GO" id="GO:0005654">
    <property type="term" value="C:nucleoplasm"/>
    <property type="evidence" value="ECO:0000250"/>
    <property type="project" value="UniProtKB"/>
</dbReference>
<dbReference type="GO" id="GO:0005634">
    <property type="term" value="C:nucleus"/>
    <property type="evidence" value="ECO:0000250"/>
    <property type="project" value="UniProtKB"/>
</dbReference>
<dbReference type="GO" id="GO:0032452">
    <property type="term" value="F:histone demethylase activity"/>
    <property type="evidence" value="ECO:0000250"/>
    <property type="project" value="UniProtKB"/>
</dbReference>
<dbReference type="GO" id="GO:0033746">
    <property type="term" value="F:histone H3R2 demethylase activity"/>
    <property type="evidence" value="ECO:0000250"/>
    <property type="project" value="UniProtKB"/>
</dbReference>
<dbReference type="GO" id="GO:0033749">
    <property type="term" value="F:histone H4R3 demethylase activity"/>
    <property type="evidence" value="ECO:0000250"/>
    <property type="project" value="UniProtKB"/>
</dbReference>
<dbReference type="GO" id="GO:0046872">
    <property type="term" value="F:metal ion binding"/>
    <property type="evidence" value="ECO:0007669"/>
    <property type="project" value="UniProtKB-KW"/>
</dbReference>
<dbReference type="GO" id="GO:0106140">
    <property type="term" value="F:P-TEFb complex binding"/>
    <property type="evidence" value="ECO:0000318"/>
    <property type="project" value="GO_Central"/>
</dbReference>
<dbReference type="GO" id="GO:0070815">
    <property type="term" value="F:peptidyl-lysine 5-dioxygenase activity"/>
    <property type="evidence" value="ECO:0000250"/>
    <property type="project" value="UniProtKB"/>
</dbReference>
<dbReference type="GO" id="GO:0003727">
    <property type="term" value="F:single-stranded RNA binding"/>
    <property type="evidence" value="ECO:0000250"/>
    <property type="project" value="UniProtKB"/>
</dbReference>
<dbReference type="GO" id="GO:0030154">
    <property type="term" value="P:cell differentiation"/>
    <property type="evidence" value="ECO:0007669"/>
    <property type="project" value="UniProtKB-KW"/>
</dbReference>
<dbReference type="GO" id="GO:0006397">
    <property type="term" value="P:mRNA processing"/>
    <property type="evidence" value="ECO:0007669"/>
    <property type="project" value="UniProtKB-KW"/>
</dbReference>
<dbReference type="GO" id="GO:0018395">
    <property type="term" value="P:peptidyl-lysine hydroxylation to 5-hydroxy-L-lysine"/>
    <property type="evidence" value="ECO:0000250"/>
    <property type="project" value="UniProtKB"/>
</dbReference>
<dbReference type="GO" id="GO:0006909">
    <property type="term" value="P:phagocytosis"/>
    <property type="evidence" value="ECO:0000315"/>
    <property type="project" value="ZFIN"/>
</dbReference>
<dbReference type="GO" id="GO:0051260">
    <property type="term" value="P:protein homooligomerization"/>
    <property type="evidence" value="ECO:0000250"/>
    <property type="project" value="UniProtKB"/>
</dbReference>
<dbReference type="GO" id="GO:0048024">
    <property type="term" value="P:regulation of mRNA splicing, via spliceosome"/>
    <property type="evidence" value="ECO:0000250"/>
    <property type="project" value="UniProtKB"/>
</dbReference>
<dbReference type="GO" id="GO:0008380">
    <property type="term" value="P:RNA splicing"/>
    <property type="evidence" value="ECO:0007669"/>
    <property type="project" value="UniProtKB-KW"/>
</dbReference>
<dbReference type="GO" id="GO:0002040">
    <property type="term" value="P:sprouting angiogenesis"/>
    <property type="evidence" value="ECO:0000250"/>
    <property type="project" value="UniProtKB"/>
</dbReference>
<dbReference type="FunFam" id="1.20.1280.270:FF:000001">
    <property type="entry name" value="Bifunctional arginine demethylase and lysyl-hydroxylase JMJD6"/>
    <property type="match status" value="1"/>
</dbReference>
<dbReference type="FunFam" id="2.60.120.650:FF:000010">
    <property type="entry name" value="bifunctional arginine demethylase and lysyl-hydroxylase JMJD6 isoform X2"/>
    <property type="match status" value="1"/>
</dbReference>
<dbReference type="Gene3D" id="1.20.1280.270">
    <property type="match status" value="1"/>
</dbReference>
<dbReference type="Gene3D" id="2.60.120.650">
    <property type="entry name" value="Cupin"/>
    <property type="match status" value="1"/>
</dbReference>
<dbReference type="InterPro" id="IPR003347">
    <property type="entry name" value="JmjC_dom"/>
</dbReference>
<dbReference type="InterPro" id="IPR050910">
    <property type="entry name" value="JMJD6_ArgDemeth/LysHydrox"/>
</dbReference>
<dbReference type="PANTHER" id="PTHR12480">
    <property type="entry name" value="ARGININE DEMETHYLASE AND LYSYL-HYDROXYLASE JMJD"/>
    <property type="match status" value="1"/>
</dbReference>
<dbReference type="PANTHER" id="PTHR12480:SF32">
    <property type="entry name" value="BIFUNCTIONAL ARGININE DEMETHYLASE AND LYSYL-HYDROXYLASE JMJD6"/>
    <property type="match status" value="1"/>
</dbReference>
<dbReference type="Pfam" id="PF02373">
    <property type="entry name" value="JmjC"/>
    <property type="match status" value="1"/>
</dbReference>
<dbReference type="SMART" id="SM00558">
    <property type="entry name" value="JmjC"/>
    <property type="match status" value="1"/>
</dbReference>
<dbReference type="SUPFAM" id="SSF51197">
    <property type="entry name" value="Clavaminate synthase-like"/>
    <property type="match status" value="1"/>
</dbReference>
<dbReference type="PROSITE" id="PS51184">
    <property type="entry name" value="JMJC"/>
    <property type="match status" value="1"/>
</dbReference>
<sequence length="403" mass="46687">MNHKSKKRIKEAKRSARPELKDSSDWTKHEYCKSFDLSHRSVKDNVERADVQRLSPEEFIQRFEKPYKPVVLLNVEDSWPAREKWTLERLKRKYRNQKFKCGEDNDGYSVKMKMKYYVEYLESTHDDSPLYIFDSSFGEHAKRRKLLEDYQVPLFFRDDLFQFAGEKRRPPYRWFVMGPARSGTGIHIDPLGTSAWNALVQGHKRWCLFPTHTPRELIKVTRDEGGNQQDEAITWFNVIYPRTQQSTWPDEFRPLEILQRPGETVFVPGGWWHVVLNLDTTIAVTQNFASTTNFPIVWHKTVRGRPKLSRKWYRILKQERPDIAAIADKVDLQESTGIASDSSSDSSSSSSSSSSDSDSEADSGSEGDAMTHRRKKRRTGGMMGNGDITSQDDCASKERSSSR</sequence>
<proteinExistence type="evidence at transcript level"/>
<comment type="function">
    <text evidence="2 3">Dioxygenase that can both act as a arginine demethylase and a lysyl-hydroxylase. Acts as a lysyl-hydroxylase that catalyzes 5-hydroxylation on specific lysine residues of target proteins such as u2af2/u2af65 and LUC7L2. Regulates RNA splicing by mediating 5-hydroxylation of u2af2/u2af65, affecting the pre-mRNA splicing activity of u2af2/u2af65. Hydroxylates its own N-terminus, which is required for homooligomerization. In addition to peptidyl-lysine 5-dioxygenase activity, may act as an RNA hydroxylase, as suggested by its ability to bind single strand RNA. Also acts as an arginine demethylase which preferentially demethylates asymmetric dimethylation. Demethylates histone H3 at 'Arg-2' (H3R2me) and histone H4 at 'Arg-3' (H4R3me), including mono-, symmetric di- and asymmetric dimethylated forms, thereby playing a role in histone code. However, histone arginine demethylation may not constitute the primary activity in vivo. In collaboration with brd4, interacts with the positive transcription elongation factor b (P-TEFb) complex in its active form to regulate polymerase II promoter-proximal pause release for transcriptional activation of a large cohort of genes. Demethylates other arginine methylated-proteins such as esr1. Has no histone lysine demethylase activity (By similarity). Required for differentiation of multiple organs during embryogenesis. Acts as a key regulator of hematopoietic differentiation (By similarity).</text>
</comment>
<comment type="catalytic activity">
    <reaction evidence="2">
        <text>L-lysyl-[protein] + 2-oxoglutarate + O2 = (5S)-5-hydroxy-L-lysyl-[protein] + succinate + CO2</text>
        <dbReference type="Rhea" id="RHEA:58360"/>
        <dbReference type="Rhea" id="RHEA-COMP:9752"/>
        <dbReference type="Rhea" id="RHEA-COMP:15144"/>
        <dbReference type="ChEBI" id="CHEBI:15379"/>
        <dbReference type="ChEBI" id="CHEBI:16526"/>
        <dbReference type="ChEBI" id="CHEBI:16810"/>
        <dbReference type="ChEBI" id="CHEBI:29969"/>
        <dbReference type="ChEBI" id="CHEBI:30031"/>
        <dbReference type="ChEBI" id="CHEBI:141843"/>
    </reaction>
</comment>
<comment type="catalytic activity">
    <reaction evidence="2">
        <text>N(omega),N(omega)'-dimethyl-L-arginyl-[protein] + 2 2-oxoglutarate + 2 O2 = L-arginyl-[protein] + 2 formaldehyde + 2 succinate + 2 CO2</text>
        <dbReference type="Rhea" id="RHEA:58348"/>
        <dbReference type="Rhea" id="RHEA-COMP:10532"/>
        <dbReference type="Rhea" id="RHEA-COMP:11992"/>
        <dbReference type="ChEBI" id="CHEBI:15379"/>
        <dbReference type="ChEBI" id="CHEBI:16526"/>
        <dbReference type="ChEBI" id="CHEBI:16810"/>
        <dbReference type="ChEBI" id="CHEBI:16842"/>
        <dbReference type="ChEBI" id="CHEBI:29965"/>
        <dbReference type="ChEBI" id="CHEBI:30031"/>
        <dbReference type="ChEBI" id="CHEBI:88221"/>
    </reaction>
</comment>
<comment type="catalytic activity">
    <reaction evidence="2">
        <text>N(omega),N(omega)'-dimethyl-L-arginyl-[protein] + 2-oxoglutarate + O2 = N(omega)-methyl-L-arginyl-[protein] + formaldehyde + succinate + CO2</text>
        <dbReference type="Rhea" id="RHEA:58472"/>
        <dbReference type="Rhea" id="RHEA-COMP:11990"/>
        <dbReference type="Rhea" id="RHEA-COMP:11992"/>
        <dbReference type="ChEBI" id="CHEBI:15379"/>
        <dbReference type="ChEBI" id="CHEBI:16526"/>
        <dbReference type="ChEBI" id="CHEBI:16810"/>
        <dbReference type="ChEBI" id="CHEBI:16842"/>
        <dbReference type="ChEBI" id="CHEBI:30031"/>
        <dbReference type="ChEBI" id="CHEBI:65280"/>
        <dbReference type="ChEBI" id="CHEBI:88221"/>
    </reaction>
</comment>
<comment type="catalytic activity">
    <reaction evidence="2">
        <text>a 5'-end methyltriphosphate-guanosine-ribonucleotide-snRNA + 2-oxoglutarate + O2 = a 5'-end triphospho-guanosine-ribonucleotide-snRNA + formaldehyde + succinate + CO2 + H(+)</text>
        <dbReference type="Rhea" id="RHEA:58784"/>
        <dbReference type="Rhea" id="RHEA-COMP:15220"/>
        <dbReference type="Rhea" id="RHEA-COMP:15221"/>
        <dbReference type="ChEBI" id="CHEBI:15378"/>
        <dbReference type="ChEBI" id="CHEBI:15379"/>
        <dbReference type="ChEBI" id="CHEBI:16526"/>
        <dbReference type="ChEBI" id="CHEBI:16810"/>
        <dbReference type="ChEBI" id="CHEBI:16842"/>
        <dbReference type="ChEBI" id="CHEBI:30031"/>
        <dbReference type="ChEBI" id="CHEBI:138278"/>
        <dbReference type="ChEBI" id="CHEBI:142789"/>
    </reaction>
</comment>
<comment type="cofactor">
    <cofactor evidence="2">
        <name>Fe(2+)</name>
        <dbReference type="ChEBI" id="CHEBI:29033"/>
    </cofactor>
    <text evidence="2">Binds 1 Fe(2+) ion per subunit.</text>
</comment>
<comment type="subcellular location">
    <subcellularLocation>
        <location evidence="2">Nucleus</location>
        <location evidence="2">Nucleoplasm</location>
    </subcellularLocation>
    <subcellularLocation>
        <location evidence="2">Nucleus</location>
        <location evidence="2">Nucleolus</location>
    </subcellularLocation>
    <subcellularLocation>
        <location evidence="2">Cytoplasm</location>
    </subcellularLocation>
</comment>
<comment type="alternative products">
    <event type="alternative splicing"/>
    <isoform>
        <id>Q6PFM0-1</id>
        <name>1</name>
        <sequence type="displayed"/>
    </isoform>
    <isoform>
        <id>Q6PFM0-2</id>
        <name>2</name>
        <name>Short</name>
        <sequence type="described" ref="VSP_014026 VSP_014027"/>
    </isoform>
    <text>Long.</text>
</comment>
<comment type="tissue specificity">
    <text evidence="6">After the somite segmentation period, it is apparent throughout the embryo and the hatching gland. At the larval (3 dpf) stage, it is detected in the heart and kidney.</text>
</comment>
<comment type="developmental stage">
    <text evidence="6">Expressed in embryos from the one-cell developmental stage to the 3 days post-fertilization (dpf) larval stage.</text>
</comment>
<comment type="domain">
    <text evidence="2">The nuclear localization signal motifs are necessary and sufficient to target it into the nucleus.</text>
</comment>
<comment type="PTM">
    <text evidence="2">Hydroxylates its own N-terminus; hydroxylation is required for homooligomerization.</text>
</comment>
<comment type="disruption phenotype">
    <text evidence="6">Fishes display an accumulation of a large number of dead apoptotic cells in whole early embryo. These cells interfere with embryonic cell migration. In addition, normal development of the somite, brain, heart and notochord are sequentially disrupted up to 24 hours post-fertilization.</text>
</comment>
<comment type="similarity">
    <text evidence="8">Belongs to the JMJD6 family.</text>
</comment>
<comment type="caution">
    <text evidence="8">Was initially thought to constitute the phosphatidylserine receptor, a receptor that mediates recognition of phosphatidylserine, a specific marker only present at the surface of apoptotic cells, and participates in apoptotic cell phagocytosis. However, some results strongly suggest that it does not constitute the receptor for phosphatidylserine and is not involved in apoptotic cell removal.</text>
</comment>
<protein>
    <recommendedName>
        <fullName>Bifunctional arginine demethylase and lysyl-hydroxylase JMJD6</fullName>
        <ecNumber>1.14.11.-</ecNumber>
    </recommendedName>
    <alternativeName>
        <fullName>Histone arginine demethylase JMJD6</fullName>
    </alternativeName>
    <alternativeName>
        <fullName>JmjC domain-containing protein 6</fullName>
    </alternativeName>
    <alternativeName>
        <fullName>Jumonji domain-containing protein 6</fullName>
    </alternativeName>
    <alternativeName>
        <fullName>Lysyl-hydroxylase JMJD6</fullName>
    </alternativeName>
    <alternativeName>
        <fullName>Peptide-lysine 5-dioxygenase JMJD6</fullName>
    </alternativeName>
    <alternativeName>
        <fullName>Phosphatidylserine receptor</fullName>
        <shortName>Protein PTDSR</shortName>
        <shortName>zfpsr</shortName>
    </alternativeName>
</protein>
<gene>
    <name type="primary">jmjd6</name>
    <name type="synonym">psr</name>
    <name type="synonym">ptdsr</name>
    <name type="ORF">zgc:66264</name>
</gene>
<organism>
    <name type="scientific">Danio rerio</name>
    <name type="common">Zebrafish</name>
    <name type="synonym">Brachydanio rerio</name>
    <dbReference type="NCBI Taxonomy" id="7955"/>
    <lineage>
        <taxon>Eukaryota</taxon>
        <taxon>Metazoa</taxon>
        <taxon>Chordata</taxon>
        <taxon>Craniata</taxon>
        <taxon>Vertebrata</taxon>
        <taxon>Euteleostomi</taxon>
        <taxon>Actinopterygii</taxon>
        <taxon>Neopterygii</taxon>
        <taxon>Teleostei</taxon>
        <taxon>Ostariophysi</taxon>
        <taxon>Cypriniformes</taxon>
        <taxon>Danionidae</taxon>
        <taxon>Danioninae</taxon>
        <taxon>Danio</taxon>
    </lineage>
</organism>
<evidence type="ECO:0000250" key="1"/>
<evidence type="ECO:0000250" key="2">
    <source>
        <dbReference type="UniProtKB" id="Q6NYC1"/>
    </source>
</evidence>
<evidence type="ECO:0000250" key="3">
    <source>
        <dbReference type="UniProtKB" id="Q9ERI5"/>
    </source>
</evidence>
<evidence type="ECO:0000255" key="4">
    <source>
        <dbReference type="PROSITE-ProRule" id="PRU00538"/>
    </source>
</evidence>
<evidence type="ECO:0000256" key="5">
    <source>
        <dbReference type="SAM" id="MobiDB-lite"/>
    </source>
</evidence>
<evidence type="ECO:0000269" key="6">
    <source>
    </source>
</evidence>
<evidence type="ECO:0000303" key="7">
    <source>
    </source>
</evidence>
<evidence type="ECO:0000305" key="8"/>
<keyword id="KW-0025">Alternative splicing</keyword>
<keyword id="KW-0156">Chromatin regulator</keyword>
<keyword id="KW-0963">Cytoplasm</keyword>
<keyword id="KW-0217">Developmental protein</keyword>
<keyword id="KW-0221">Differentiation</keyword>
<keyword id="KW-0223">Dioxygenase</keyword>
<keyword id="KW-0408">Iron</keyword>
<keyword id="KW-0479">Metal-binding</keyword>
<keyword id="KW-0507">mRNA processing</keyword>
<keyword id="KW-0508">mRNA splicing</keyword>
<keyword id="KW-0539">Nucleus</keyword>
<keyword id="KW-0560">Oxidoreductase</keyword>
<keyword id="KW-1185">Reference proteome</keyword>
<keyword id="KW-0694">RNA-binding</keyword>
<keyword id="KW-0804">Transcription</keyword>
<keyword id="KW-0805">Transcription regulation</keyword>
<name>JMJD6_DANRE</name>
<reference key="1">
    <citation type="journal article" date="2004" name="Development">
        <title>Phosphatidylserine receptor is required for the engulfment of dead apoptotic cells and for normal embryonic development in zebrafish.</title>
        <authorList>
            <person name="Hong J.-R."/>
            <person name="Lin G.-H."/>
            <person name="Lin C.J.-F."/>
            <person name="Wang W.-P."/>
            <person name="Lee C.-C."/>
            <person name="Lin T.-L."/>
            <person name="Wu J.-L."/>
        </authorList>
    </citation>
    <scope>NUCLEOTIDE SEQUENCE [MRNA] (ISOFORMS 1 AND 2)</scope>
    <scope>TISSUE SPECIFICITY</scope>
    <scope>DEVELOPMENTAL STAGE</scope>
    <scope>DISRUPTION PHENOTYPE</scope>
    <source>
        <tissue>Embryo</tissue>
    </source>
</reference>
<reference key="2">
    <citation type="submission" date="2003-09" db="EMBL/GenBank/DDBJ databases">
        <authorList>
            <consortium name="NIH - Zebrafish Gene Collection (ZGC) project"/>
        </authorList>
    </citation>
    <scope>NUCLEOTIDE SEQUENCE [LARGE SCALE MRNA] (ISOFORM 1)</scope>
    <source>
        <strain>SJD</strain>
    </source>
</reference>
<accession>Q6PFM0</accession>
<accession>Q8JI07</accession>
<accession>Q8JI08</accession>
<feature type="chain" id="PRO_0000129374" description="Bifunctional arginine demethylase and lysyl-hydroxylase JMJD6">
    <location>
        <begin position="1"/>
        <end position="403"/>
    </location>
</feature>
<feature type="domain" description="JmjC" evidence="4">
    <location>
        <begin position="141"/>
        <end position="305"/>
    </location>
</feature>
<feature type="region of interest" description="Disordered" evidence="5">
    <location>
        <begin position="1"/>
        <end position="23"/>
    </location>
</feature>
<feature type="region of interest" description="Disordered" evidence="5">
    <location>
        <begin position="335"/>
        <end position="403"/>
    </location>
</feature>
<feature type="short sequence motif" description="Nuclear localization signal 1" evidence="2">
    <location>
        <begin position="6"/>
        <end position="10"/>
    </location>
</feature>
<feature type="short sequence motif" description="Nuclear localization signal 2" evidence="2">
    <location>
        <begin position="91"/>
        <end position="95"/>
    </location>
</feature>
<feature type="short sequence motif" description="Nuclear localization signal 3" evidence="2">
    <location>
        <begin position="141"/>
        <end position="145"/>
    </location>
</feature>
<feature type="short sequence motif" description="Nuclear localization signal 4" evidence="2">
    <location>
        <begin position="167"/>
        <end position="170"/>
    </location>
</feature>
<feature type="short sequence motif" description="Nuclear localization signal 5" evidence="2">
    <location>
        <begin position="373"/>
        <end position="378"/>
    </location>
</feature>
<feature type="compositionally biased region" description="Basic residues" evidence="5">
    <location>
        <begin position="1"/>
        <end position="11"/>
    </location>
</feature>
<feature type="compositionally biased region" description="Basic and acidic residues" evidence="5">
    <location>
        <begin position="12"/>
        <end position="23"/>
    </location>
</feature>
<feature type="compositionally biased region" description="Low complexity" evidence="5">
    <location>
        <begin position="339"/>
        <end position="356"/>
    </location>
</feature>
<feature type="compositionally biased region" description="Basic and acidic residues" evidence="5">
    <location>
        <begin position="394"/>
        <end position="403"/>
    </location>
</feature>
<feature type="binding site" evidence="1">
    <location>
        <position position="184"/>
    </location>
    <ligand>
        <name>substrate</name>
    </ligand>
</feature>
<feature type="binding site" evidence="4">
    <location>
        <position position="187"/>
    </location>
    <ligand>
        <name>Fe cation</name>
        <dbReference type="ChEBI" id="CHEBI:24875"/>
        <note>catalytic</note>
    </ligand>
</feature>
<feature type="binding site" evidence="4">
    <location>
        <position position="189"/>
    </location>
    <ligand>
        <name>Fe cation</name>
        <dbReference type="ChEBI" id="CHEBI:24875"/>
        <note>catalytic</note>
    </ligand>
</feature>
<feature type="binding site" evidence="2">
    <location>
        <position position="197"/>
    </location>
    <ligand>
        <name>2-oxoglutarate</name>
        <dbReference type="ChEBI" id="CHEBI:16810"/>
    </ligand>
</feature>
<feature type="binding site" evidence="1">
    <location>
        <position position="204"/>
    </location>
    <ligand>
        <name>substrate</name>
    </ligand>
</feature>
<feature type="binding site" evidence="4">
    <location>
        <position position="273"/>
    </location>
    <ligand>
        <name>Fe cation</name>
        <dbReference type="ChEBI" id="CHEBI:24875"/>
        <note>catalytic</note>
    </ligand>
</feature>
<feature type="binding site" evidence="2">
    <location>
        <position position="285"/>
    </location>
    <ligand>
        <name>2-oxoglutarate</name>
        <dbReference type="ChEBI" id="CHEBI:16810"/>
    </ligand>
</feature>
<feature type="splice variant" id="VSP_014026" description="In isoform 2." evidence="7">
    <original>PRELIKVTRDEGG</original>
    <variation>HTRFIIFNKLVCE</variation>
    <location>
        <begin position="214"/>
        <end position="226"/>
    </location>
</feature>
<feature type="splice variant" id="VSP_014027" description="In isoform 2." evidence="7">
    <location>
        <begin position="227"/>
        <end position="403"/>
    </location>
</feature>
<feature type="sequence conflict" description="In Ref. 2; AAH57498." evidence="8" ref="2">
    <original>N</original>
    <variation>S</variation>
    <location>
        <position position="385"/>
    </location>
</feature>